<organism>
    <name type="scientific">Shigella flexneri</name>
    <dbReference type="NCBI Taxonomy" id="623"/>
    <lineage>
        <taxon>Bacteria</taxon>
        <taxon>Pseudomonadati</taxon>
        <taxon>Pseudomonadota</taxon>
        <taxon>Gammaproteobacteria</taxon>
        <taxon>Enterobacterales</taxon>
        <taxon>Enterobacteriaceae</taxon>
        <taxon>Shigella</taxon>
    </lineage>
</organism>
<evidence type="ECO:0000255" key="1">
    <source>
        <dbReference type="PROSITE-ProRule" id="PRU00253"/>
    </source>
</evidence>
<evidence type="ECO:0000305" key="2"/>
<gene>
    <name type="primary">yfeR</name>
    <name type="ordered locus">SF2464</name>
    <name type="ordered locus">S2610</name>
</gene>
<proteinExistence type="inferred from homology"/>
<protein>
    <recommendedName>
        <fullName>Uncharacterized HTH-type transcriptional regulator YfeR</fullName>
    </recommendedName>
</protein>
<dbReference type="EMBL" id="AE005674">
    <property type="protein sequence ID" value="AAN43971.1"/>
    <property type="molecule type" value="Genomic_DNA"/>
</dbReference>
<dbReference type="EMBL" id="AE014073">
    <property type="protein sequence ID" value="AAP17784.1"/>
    <property type="molecule type" value="Genomic_DNA"/>
</dbReference>
<dbReference type="RefSeq" id="NP_708264.1">
    <property type="nucleotide sequence ID" value="NC_004337.2"/>
</dbReference>
<dbReference type="RefSeq" id="WP_001109794.1">
    <property type="nucleotide sequence ID" value="NZ_WPGW01000027.1"/>
</dbReference>
<dbReference type="SMR" id="P0ACR8"/>
<dbReference type="STRING" id="198214.SF2464"/>
<dbReference type="PaxDb" id="198214-SF2464"/>
<dbReference type="GeneID" id="1026769"/>
<dbReference type="KEGG" id="sfl:SF2464"/>
<dbReference type="KEGG" id="sfx:S2610"/>
<dbReference type="PATRIC" id="fig|198214.7.peg.2944"/>
<dbReference type="HOGENOM" id="CLU_039613_6_0_6"/>
<dbReference type="Proteomes" id="UP000001006">
    <property type="component" value="Chromosome"/>
</dbReference>
<dbReference type="Proteomes" id="UP000002673">
    <property type="component" value="Chromosome"/>
</dbReference>
<dbReference type="GO" id="GO:0005829">
    <property type="term" value="C:cytosol"/>
    <property type="evidence" value="ECO:0007669"/>
    <property type="project" value="TreeGrafter"/>
</dbReference>
<dbReference type="GO" id="GO:0003677">
    <property type="term" value="F:DNA binding"/>
    <property type="evidence" value="ECO:0007669"/>
    <property type="project" value="UniProtKB-KW"/>
</dbReference>
<dbReference type="GO" id="GO:0003700">
    <property type="term" value="F:DNA-binding transcription factor activity"/>
    <property type="evidence" value="ECO:0007669"/>
    <property type="project" value="InterPro"/>
</dbReference>
<dbReference type="CDD" id="cd08440">
    <property type="entry name" value="PBP2_LTTR_like_4"/>
    <property type="match status" value="1"/>
</dbReference>
<dbReference type="FunFam" id="1.10.10.10:FF:000001">
    <property type="entry name" value="LysR family transcriptional regulator"/>
    <property type="match status" value="1"/>
</dbReference>
<dbReference type="FunFam" id="3.40.190.290:FF:000008">
    <property type="entry name" value="LysR family transcriptional regulator"/>
    <property type="match status" value="1"/>
</dbReference>
<dbReference type="Gene3D" id="3.40.190.290">
    <property type="match status" value="1"/>
</dbReference>
<dbReference type="Gene3D" id="1.10.10.10">
    <property type="entry name" value="Winged helix-like DNA-binding domain superfamily/Winged helix DNA-binding domain"/>
    <property type="match status" value="1"/>
</dbReference>
<dbReference type="InterPro" id="IPR050950">
    <property type="entry name" value="HTH-type_LysR_regulators"/>
</dbReference>
<dbReference type="InterPro" id="IPR005119">
    <property type="entry name" value="LysR_subst-bd"/>
</dbReference>
<dbReference type="InterPro" id="IPR000847">
    <property type="entry name" value="Tscrpt_reg_HTH_LysR"/>
</dbReference>
<dbReference type="InterPro" id="IPR036388">
    <property type="entry name" value="WH-like_DNA-bd_sf"/>
</dbReference>
<dbReference type="InterPro" id="IPR036390">
    <property type="entry name" value="WH_DNA-bd_sf"/>
</dbReference>
<dbReference type="PANTHER" id="PTHR30419">
    <property type="entry name" value="HTH-TYPE TRANSCRIPTIONAL REGULATOR YBHD"/>
    <property type="match status" value="1"/>
</dbReference>
<dbReference type="PANTHER" id="PTHR30419:SF14">
    <property type="entry name" value="LYSR FAMILY TRANSCRIPTIONAL REGULATOR"/>
    <property type="match status" value="1"/>
</dbReference>
<dbReference type="Pfam" id="PF00126">
    <property type="entry name" value="HTH_1"/>
    <property type="match status" value="1"/>
</dbReference>
<dbReference type="Pfam" id="PF03466">
    <property type="entry name" value="LysR_substrate"/>
    <property type="match status" value="1"/>
</dbReference>
<dbReference type="PRINTS" id="PR00039">
    <property type="entry name" value="HTHLYSR"/>
</dbReference>
<dbReference type="SUPFAM" id="SSF53850">
    <property type="entry name" value="Periplasmic binding protein-like II"/>
    <property type="match status" value="1"/>
</dbReference>
<dbReference type="SUPFAM" id="SSF46785">
    <property type="entry name" value="Winged helix' DNA-binding domain"/>
    <property type="match status" value="1"/>
</dbReference>
<dbReference type="PROSITE" id="PS50931">
    <property type="entry name" value="HTH_LYSR"/>
    <property type="match status" value="1"/>
</dbReference>
<feature type="chain" id="PRO_0000105792" description="Uncharacterized HTH-type transcriptional regulator YfeR">
    <location>
        <begin position="1"/>
        <end position="308"/>
    </location>
</feature>
<feature type="domain" description="HTH lysR-type" evidence="1">
    <location>
        <begin position="1"/>
        <end position="60"/>
    </location>
</feature>
<feature type="DNA-binding region" description="H-T-H motif" evidence="1">
    <location>
        <begin position="20"/>
        <end position="39"/>
    </location>
</feature>
<sequence length="308" mass="33903">MNYSLKQLKVFVTVAQEKSFSRAGERIGLSQSAVSHSVKELENHTGVRLLDRTTREVVLTDAGQQLALRLERLLDELNSTLRDTGRMGQQLSGKVRVAASQTISAHLIPQCIAESHRRYPDIQFVLHDRPQQWVMESIRQGDVDFGIVIDPGPVGDLQCEAILSEPFFLLCHRDSALAVEDYVPWQALQGAKLVLQDYASGSRPLIDAALARNGIQANIVQEIGHPATLFPMVAAGIGISILPALALPLPEGSPLVVKRITPVVERQLMLVRRKNRSLSTAAEALWDVVRDQGNALMAGREGDPLYQI</sequence>
<accession>P0ACR8</accession>
<accession>P77500</accession>
<comment type="similarity">
    <text evidence="2">Belongs to the LysR transcriptional regulatory family.</text>
</comment>
<reference key="1">
    <citation type="journal article" date="2002" name="Nucleic Acids Res.">
        <title>Genome sequence of Shigella flexneri 2a: insights into pathogenicity through comparison with genomes of Escherichia coli K12 and O157.</title>
        <authorList>
            <person name="Jin Q."/>
            <person name="Yuan Z."/>
            <person name="Xu J."/>
            <person name="Wang Y."/>
            <person name="Shen Y."/>
            <person name="Lu W."/>
            <person name="Wang J."/>
            <person name="Liu H."/>
            <person name="Yang J."/>
            <person name="Yang F."/>
            <person name="Zhang X."/>
            <person name="Zhang J."/>
            <person name="Yang G."/>
            <person name="Wu H."/>
            <person name="Qu D."/>
            <person name="Dong J."/>
            <person name="Sun L."/>
            <person name="Xue Y."/>
            <person name="Zhao A."/>
            <person name="Gao Y."/>
            <person name="Zhu J."/>
            <person name="Kan B."/>
            <person name="Ding K."/>
            <person name="Chen S."/>
            <person name="Cheng H."/>
            <person name="Yao Z."/>
            <person name="He B."/>
            <person name="Chen R."/>
            <person name="Ma D."/>
            <person name="Qiang B."/>
            <person name="Wen Y."/>
            <person name="Hou Y."/>
            <person name="Yu J."/>
        </authorList>
    </citation>
    <scope>NUCLEOTIDE SEQUENCE [LARGE SCALE GENOMIC DNA]</scope>
    <source>
        <strain>301 / Serotype 2a</strain>
    </source>
</reference>
<reference key="2">
    <citation type="journal article" date="2003" name="Infect. Immun.">
        <title>Complete genome sequence and comparative genomics of Shigella flexneri serotype 2a strain 2457T.</title>
        <authorList>
            <person name="Wei J."/>
            <person name="Goldberg M.B."/>
            <person name="Burland V."/>
            <person name="Venkatesan M.M."/>
            <person name="Deng W."/>
            <person name="Fournier G."/>
            <person name="Mayhew G.F."/>
            <person name="Plunkett G. III"/>
            <person name="Rose D.J."/>
            <person name="Darling A."/>
            <person name="Mau B."/>
            <person name="Perna N.T."/>
            <person name="Payne S.M."/>
            <person name="Runyen-Janecky L.J."/>
            <person name="Zhou S."/>
            <person name="Schwartz D.C."/>
            <person name="Blattner F.R."/>
        </authorList>
    </citation>
    <scope>NUCLEOTIDE SEQUENCE [LARGE SCALE GENOMIC DNA]</scope>
    <source>
        <strain>ATCC 700930 / 2457T / Serotype 2a</strain>
    </source>
</reference>
<keyword id="KW-0238">DNA-binding</keyword>
<keyword id="KW-1185">Reference proteome</keyword>
<keyword id="KW-0804">Transcription</keyword>
<keyword id="KW-0805">Transcription regulation</keyword>
<name>YFER_SHIFL</name>